<feature type="signal peptide" evidence="2">
    <location>
        <begin position="1"/>
        <end position="29"/>
    </location>
</feature>
<feature type="chain" id="PRO_0000001114" description="Alginate biosynthesis protein AlgF">
    <location>
        <begin position="30"/>
        <end position="217"/>
    </location>
</feature>
<reference key="1">
    <citation type="journal article" date="1999" name="Gene">
        <title>Transcriptional organization of the Azotobacter vinelandii algGXLVIFA genes: characterization of algF mutants.</title>
        <authorList>
            <person name="Vazquez-Ramos A."/>
            <person name="Moreno S."/>
            <person name="Guzman J."/>
            <person name="Alvarado A."/>
            <person name="Espin G."/>
        </authorList>
    </citation>
    <scope>NUCLEOTIDE SEQUENCE [GENOMIC DNA]</scope>
    <source>
        <strain>ATCC 9046</strain>
    </source>
</reference>
<dbReference type="EMBL" id="X99019">
    <property type="protein sequence ID" value="CAA67490.1"/>
    <property type="molecule type" value="Genomic_DNA"/>
</dbReference>
<dbReference type="RefSeq" id="WP_012699739.1">
    <property type="nucleotide sequence ID" value="NZ_FPKM01000036.1"/>
</dbReference>
<dbReference type="SMR" id="P70799"/>
<dbReference type="OMA" id="PVWVKPP"/>
<dbReference type="UniPathway" id="UPA00286"/>
<dbReference type="GO" id="GO:0042597">
    <property type="term" value="C:periplasmic space"/>
    <property type="evidence" value="ECO:0007669"/>
    <property type="project" value="UniProtKB-SubCell"/>
</dbReference>
<dbReference type="GO" id="GO:0051979">
    <property type="term" value="P:alginic acid acetylation"/>
    <property type="evidence" value="ECO:0000315"/>
    <property type="project" value="CACAO"/>
</dbReference>
<dbReference type="GO" id="GO:0042121">
    <property type="term" value="P:alginic acid biosynthetic process"/>
    <property type="evidence" value="ECO:0007669"/>
    <property type="project" value="UniProtKB-UniPathway"/>
</dbReference>
<dbReference type="InterPro" id="IPR035422">
    <property type="entry name" value="AlgF"/>
</dbReference>
<dbReference type="Pfam" id="PF11182">
    <property type="entry name" value="AlgF"/>
    <property type="match status" value="1"/>
</dbReference>
<protein>
    <recommendedName>
        <fullName>Alginate biosynthesis protein AlgF</fullName>
    </recommendedName>
</protein>
<name>ALGF_AZOVI</name>
<sequence length="217" mass="23195">MTRLHRKHRIALGLGLGLLLGFGGTTVQAAGDAALYEAVAPKGSTFVRLYNASNQEVSANVGSINLEDVSPLSSSGFEYLPAGQYSARVGSQNLPVNLSAEHYYTLVTQSGAAPLLVEEPAFKSKQKALLRVQNLSDKPLTLKTADGKTEVVKSVEPKGRGDREINPVKANLALFDGERKVADLKPISLARGEVVCLYVTGTANQLNPVWVKPPVKE</sequence>
<accession>P70799</accession>
<gene>
    <name type="primary">algF</name>
</gene>
<keyword id="KW-0016">Alginate biosynthesis</keyword>
<keyword id="KW-0574">Periplasm</keyword>
<keyword id="KW-0732">Signal</keyword>
<organism>
    <name type="scientific">Azotobacter vinelandii</name>
    <dbReference type="NCBI Taxonomy" id="354"/>
    <lineage>
        <taxon>Bacteria</taxon>
        <taxon>Pseudomonadati</taxon>
        <taxon>Pseudomonadota</taxon>
        <taxon>Gammaproteobacteria</taxon>
        <taxon>Pseudomonadales</taxon>
        <taxon>Pseudomonadaceae</taxon>
        <taxon>Azotobacter</taxon>
    </lineage>
</organism>
<comment type="function">
    <text>Together with AlgI and AlgJ, forms an inner membrane complex which probably interacts with the alginate polymerization-transport complex and adds acetyl groups at the O-2 and O-3 positions of mannuronate residues. Acetylation of alginate increases cyst resistance to desiccation.</text>
</comment>
<comment type="pathway">
    <text>Glycan biosynthesis; alginate biosynthesis.</text>
</comment>
<comment type="subcellular location">
    <subcellularLocation>
        <location evidence="1">Periplasm</location>
    </subcellularLocation>
</comment>
<comment type="similarity">
    <text evidence="3">Belongs to the AlgF family.</text>
</comment>
<proteinExistence type="inferred from homology"/>
<evidence type="ECO:0000250" key="1"/>
<evidence type="ECO:0000255" key="2"/>
<evidence type="ECO:0000305" key="3"/>